<reference key="1">
    <citation type="journal article" date="2008" name="Nat. Biotechnol.">
        <title>Genome sequencing and analysis of the filamentous fungus Penicillium chrysogenum.</title>
        <authorList>
            <person name="van den Berg M.A."/>
            <person name="Albang R."/>
            <person name="Albermann K."/>
            <person name="Badger J.H."/>
            <person name="Daran J.-M."/>
            <person name="Driessen A.J.M."/>
            <person name="Garcia-Estrada C."/>
            <person name="Fedorova N.D."/>
            <person name="Harris D.M."/>
            <person name="Heijne W.H.M."/>
            <person name="Joardar V.S."/>
            <person name="Kiel J.A.K.W."/>
            <person name="Kovalchuk A."/>
            <person name="Martin J.F."/>
            <person name="Nierman W.C."/>
            <person name="Nijland J.G."/>
            <person name="Pronk J.T."/>
            <person name="Roubos J.A."/>
            <person name="van der Klei I.J."/>
            <person name="van Peij N.N.M.E."/>
            <person name="Veenhuis M."/>
            <person name="von Doehren H."/>
            <person name="Wagner C."/>
            <person name="Wortman J.R."/>
            <person name="Bovenberg R.A.L."/>
        </authorList>
    </citation>
    <scope>NUCLEOTIDE SEQUENCE [LARGE SCALE GENOMIC DNA]</scope>
    <source>
        <strain>ATCC 28089 / DSM 1075 / NRRL 1951 / Wisconsin 54-1255</strain>
    </source>
</reference>
<accession>B6HNY8</accession>
<feature type="chain" id="PRO_0000393837" description="Methylthioribulose-1-phosphate dehydratase">
    <location>
        <begin position="1"/>
        <end position="243"/>
    </location>
</feature>
<feature type="region of interest" description="Disordered" evidence="2">
    <location>
        <begin position="1"/>
        <end position="22"/>
    </location>
</feature>
<feature type="compositionally biased region" description="Polar residues" evidence="2">
    <location>
        <begin position="7"/>
        <end position="16"/>
    </location>
</feature>
<feature type="active site" description="Proton donor/acceptor" evidence="1">
    <location>
        <position position="149"/>
    </location>
</feature>
<feature type="binding site" evidence="1">
    <location>
        <position position="103"/>
    </location>
    <ligand>
        <name>substrate</name>
    </ligand>
</feature>
<feature type="binding site" evidence="1">
    <location>
        <position position="120"/>
    </location>
    <ligand>
        <name>Zn(2+)</name>
        <dbReference type="ChEBI" id="CHEBI:29105"/>
    </ligand>
</feature>
<feature type="binding site" evidence="1">
    <location>
        <position position="122"/>
    </location>
    <ligand>
        <name>Zn(2+)</name>
        <dbReference type="ChEBI" id="CHEBI:29105"/>
    </ligand>
</feature>
<feature type="binding site" evidence="1">
    <location>
        <position position="205"/>
    </location>
    <ligand>
        <name>Zn(2+)</name>
        <dbReference type="ChEBI" id="CHEBI:29105"/>
    </ligand>
</feature>
<dbReference type="EC" id="4.2.1.109" evidence="1"/>
<dbReference type="EMBL" id="AM920437">
    <property type="protein sequence ID" value="CAP97566.1"/>
    <property type="molecule type" value="Genomic_DNA"/>
</dbReference>
<dbReference type="RefSeq" id="XP_002564322.1">
    <property type="nucleotide sequence ID" value="XM_002564276.1"/>
</dbReference>
<dbReference type="SMR" id="B6HNY8"/>
<dbReference type="STRING" id="500485.B6HNY8"/>
<dbReference type="GeneID" id="8311597"/>
<dbReference type="KEGG" id="pcs:N7525_005925"/>
<dbReference type="VEuPathDB" id="FungiDB:PCH_Pc22g02780"/>
<dbReference type="eggNOG" id="KOG2631">
    <property type="taxonomic scope" value="Eukaryota"/>
</dbReference>
<dbReference type="HOGENOM" id="CLU_006033_4_0_1"/>
<dbReference type="OMA" id="WFPGTSG"/>
<dbReference type="OrthoDB" id="191080at2759"/>
<dbReference type="BioCyc" id="PCHR:PC22G02780-MONOMER"/>
<dbReference type="UniPathway" id="UPA00904">
    <property type="reaction ID" value="UER00875"/>
</dbReference>
<dbReference type="Proteomes" id="UP000000724">
    <property type="component" value="Contig Pc00c22"/>
</dbReference>
<dbReference type="GO" id="GO:0005737">
    <property type="term" value="C:cytoplasm"/>
    <property type="evidence" value="ECO:0007669"/>
    <property type="project" value="UniProtKB-SubCell"/>
</dbReference>
<dbReference type="GO" id="GO:0046570">
    <property type="term" value="F:methylthioribulose 1-phosphate dehydratase activity"/>
    <property type="evidence" value="ECO:0007669"/>
    <property type="project" value="UniProtKB-UniRule"/>
</dbReference>
<dbReference type="GO" id="GO:0008270">
    <property type="term" value="F:zinc ion binding"/>
    <property type="evidence" value="ECO:0007669"/>
    <property type="project" value="UniProtKB-UniRule"/>
</dbReference>
<dbReference type="GO" id="GO:0019509">
    <property type="term" value="P:L-methionine salvage from methylthioadenosine"/>
    <property type="evidence" value="ECO:0007669"/>
    <property type="project" value="UniProtKB-UniRule"/>
</dbReference>
<dbReference type="FunFam" id="3.40.225.10:FF:000003">
    <property type="entry name" value="Methylthioribulose-1-phosphate dehydratase"/>
    <property type="match status" value="1"/>
</dbReference>
<dbReference type="Gene3D" id="3.40.225.10">
    <property type="entry name" value="Class II aldolase/adducin N-terminal domain"/>
    <property type="match status" value="1"/>
</dbReference>
<dbReference type="HAMAP" id="MF_03116">
    <property type="entry name" value="Salvage_MtnB_euk"/>
    <property type="match status" value="1"/>
</dbReference>
<dbReference type="InterPro" id="IPR001303">
    <property type="entry name" value="Aldolase_II/adducin_N"/>
</dbReference>
<dbReference type="InterPro" id="IPR036409">
    <property type="entry name" value="Aldolase_II/adducin_N_sf"/>
</dbReference>
<dbReference type="InterPro" id="IPR017714">
    <property type="entry name" value="MethylthioRu-1-P_deHdtase_MtnB"/>
</dbReference>
<dbReference type="InterPro" id="IPR027514">
    <property type="entry name" value="Salvage_MtnB_euk"/>
</dbReference>
<dbReference type="NCBIfam" id="TIGR03328">
    <property type="entry name" value="salvage_mtnB"/>
    <property type="match status" value="1"/>
</dbReference>
<dbReference type="PANTHER" id="PTHR10640">
    <property type="entry name" value="METHYLTHIORIBULOSE-1-PHOSPHATE DEHYDRATASE"/>
    <property type="match status" value="1"/>
</dbReference>
<dbReference type="PANTHER" id="PTHR10640:SF7">
    <property type="entry name" value="METHYLTHIORIBULOSE-1-PHOSPHATE DEHYDRATASE"/>
    <property type="match status" value="1"/>
</dbReference>
<dbReference type="Pfam" id="PF00596">
    <property type="entry name" value="Aldolase_II"/>
    <property type="match status" value="1"/>
</dbReference>
<dbReference type="SMART" id="SM01007">
    <property type="entry name" value="Aldolase_II"/>
    <property type="match status" value="1"/>
</dbReference>
<dbReference type="SUPFAM" id="SSF53639">
    <property type="entry name" value="AraD/HMP-PK domain-like"/>
    <property type="match status" value="1"/>
</dbReference>
<gene>
    <name evidence="1" type="primary">mde1</name>
    <name type="ORF">Pc22g02780</name>
</gene>
<protein>
    <recommendedName>
        <fullName evidence="1">Methylthioribulose-1-phosphate dehydratase</fullName>
        <shortName evidence="1">MTRu-1-P dehydratase</shortName>
        <ecNumber evidence="1">4.2.1.109</ecNumber>
    </recommendedName>
</protein>
<organism>
    <name type="scientific">Penicillium rubens (strain ATCC 28089 / DSM 1075 / NRRL 1951 / Wisconsin 54-1255)</name>
    <name type="common">Penicillium chrysogenum</name>
    <dbReference type="NCBI Taxonomy" id="500485"/>
    <lineage>
        <taxon>Eukaryota</taxon>
        <taxon>Fungi</taxon>
        <taxon>Dikarya</taxon>
        <taxon>Ascomycota</taxon>
        <taxon>Pezizomycotina</taxon>
        <taxon>Eurotiomycetes</taxon>
        <taxon>Eurotiomycetidae</taxon>
        <taxon>Eurotiales</taxon>
        <taxon>Aspergillaceae</taxon>
        <taxon>Penicillium</taxon>
        <taxon>Penicillium chrysogenum species complex</taxon>
    </lineage>
</organism>
<name>MTNB_PENRW</name>
<evidence type="ECO:0000255" key="1">
    <source>
        <dbReference type="HAMAP-Rule" id="MF_03116"/>
    </source>
</evidence>
<evidence type="ECO:0000256" key="2">
    <source>
        <dbReference type="SAM" id="MobiDB-lite"/>
    </source>
</evidence>
<keyword id="KW-0028">Amino-acid biosynthesis</keyword>
<keyword id="KW-0963">Cytoplasm</keyword>
<keyword id="KW-0456">Lyase</keyword>
<keyword id="KW-0479">Metal-binding</keyword>
<keyword id="KW-0486">Methionine biosynthesis</keyword>
<keyword id="KW-1185">Reference proteome</keyword>
<keyword id="KW-0862">Zinc</keyword>
<comment type="function">
    <text evidence="1">Catalyzes the dehydration of methylthioribulose-1-phosphate (MTRu-1-P) into 2,3-diketo-5-methylthiopentyl-1-phosphate (DK-MTP-1-P).</text>
</comment>
<comment type="catalytic activity">
    <reaction evidence="1">
        <text>5-(methylsulfanyl)-D-ribulose 1-phosphate = 5-methylsulfanyl-2,3-dioxopentyl phosphate + H2O</text>
        <dbReference type="Rhea" id="RHEA:15549"/>
        <dbReference type="ChEBI" id="CHEBI:15377"/>
        <dbReference type="ChEBI" id="CHEBI:58548"/>
        <dbReference type="ChEBI" id="CHEBI:58828"/>
        <dbReference type="EC" id="4.2.1.109"/>
    </reaction>
</comment>
<comment type="cofactor">
    <cofactor evidence="1">
        <name>Zn(2+)</name>
        <dbReference type="ChEBI" id="CHEBI:29105"/>
    </cofactor>
    <text evidence="1">Binds 1 zinc ion per subunit.</text>
</comment>
<comment type="pathway">
    <text evidence="1">Amino-acid biosynthesis; L-methionine biosynthesis via salvage pathway; L-methionine from S-methyl-5-thio-alpha-D-ribose 1-phosphate: step 2/6.</text>
</comment>
<comment type="subcellular location">
    <subcellularLocation>
        <location evidence="1">Cytoplasm</location>
    </subcellularLocation>
</comment>
<comment type="similarity">
    <text evidence="1">Belongs to the aldolase class II family. MtnB subfamily.</text>
</comment>
<proteinExistence type="inferred from homology"/>
<sequence length="243" mass="27182">MCPADQTVATNNNDHLVQSEDPEHPANLIPELCRKFYNWGWVTGTGGGTSIRQGDHIFIAPSGVQKELMQPHNIFVLQWPTPKYPASERNYIRKPLKLNPSACTPLFLTAFEQGAGCCIHTHSQWAVLVTLLVEREKGPDACFEISNIEQIKGIPRGKGKGMLGFFDTLKIPIIENTAFEEDLTSGLEAAMNKYPDAYAVLVRRHGIYVWGDNTAKAKTQCESLDYIFQLAVEMHKLGLPWVK</sequence>